<proteinExistence type="evidence at protein level"/>
<comment type="function">
    <text>Negatively controls the expression of the four operons of arginine biosynthesis in addition to the carAB operon. Predominantly interacts with A/T residues in ARG boxes. It also binds to a specific site in cer locus. Thus it is essential for cer-mediated site-specific recombination in ColE1. It is necessary for monomerization of the plasmid ColE1.</text>
</comment>
<comment type="pathway">
    <text>Amino-acid biosynthesis; L-arginine biosynthesis [regulation].</text>
</comment>
<comment type="subunit">
    <text>Homohexamer.</text>
</comment>
<comment type="subcellular location">
    <subcellularLocation>
        <location>Cytoplasm</location>
    </subcellularLocation>
</comment>
<comment type="similarity">
    <text evidence="1">Belongs to the ArgR family.</text>
</comment>
<reference key="1">
    <citation type="journal article" date="1988" name="EMBO J.">
        <title>The arginine repressor is essential for plasmid-stabilizing site-specific recombination at the ColE1 cer locus.</title>
        <authorList>
            <person name="Stirling C.J."/>
            <person name="Szatmari G."/>
            <person name="Stewart G."/>
            <person name="Smith M.C.M."/>
            <person name="Sherratt D.J."/>
        </authorList>
    </citation>
    <scope>NUCLEOTIDE SEQUENCE [GENOMIC DNA]</scope>
    <source>
        <strain>K12</strain>
    </source>
</reference>
<reference key="2">
    <citation type="journal article" date="1987" name="Proc. Natl. Acad. Sci. U.S.A.">
        <title>Nucleotide sequence of the argR gene of Escherichia coli K-12 and isolation of its product, the arginine repressor.</title>
        <authorList>
            <person name="Lim D."/>
            <person name="Oppenheim J.D."/>
            <person name="Eckhardt T."/>
            <person name="Maas W.K."/>
        </authorList>
    </citation>
    <scope>NUCLEOTIDE SEQUENCE [GENOMIC DNA]</scope>
    <source>
        <strain>K12</strain>
    </source>
</reference>
<reference key="3">
    <citation type="journal article" date="1997" name="Science">
        <title>The complete genome sequence of Escherichia coli K-12.</title>
        <authorList>
            <person name="Blattner F.R."/>
            <person name="Plunkett G. III"/>
            <person name="Bloch C.A."/>
            <person name="Perna N.T."/>
            <person name="Burland V."/>
            <person name="Riley M."/>
            <person name="Collado-Vides J."/>
            <person name="Glasner J.D."/>
            <person name="Rode C.K."/>
            <person name="Mayhew G.F."/>
            <person name="Gregor J."/>
            <person name="Davis N.W."/>
            <person name="Kirkpatrick H.A."/>
            <person name="Goeden M.A."/>
            <person name="Rose D.J."/>
            <person name="Mau B."/>
            <person name="Shao Y."/>
        </authorList>
    </citation>
    <scope>NUCLEOTIDE SEQUENCE [LARGE SCALE GENOMIC DNA]</scope>
    <source>
        <strain>K12 / MG1655 / ATCC 47076</strain>
    </source>
</reference>
<reference key="4">
    <citation type="journal article" date="2006" name="Mol. Syst. Biol.">
        <title>Highly accurate genome sequences of Escherichia coli K-12 strains MG1655 and W3110.</title>
        <authorList>
            <person name="Hayashi K."/>
            <person name="Morooka N."/>
            <person name="Yamamoto Y."/>
            <person name="Fujita K."/>
            <person name="Isono K."/>
            <person name="Choi S."/>
            <person name="Ohtsubo E."/>
            <person name="Baba T."/>
            <person name="Wanner B.L."/>
            <person name="Mori H."/>
            <person name="Horiuchi T."/>
        </authorList>
    </citation>
    <scope>NUCLEOTIDE SEQUENCE [LARGE SCALE GENOMIC DNA]</scope>
    <source>
        <strain>K12 / W3110 / ATCC 27325 / DSM 5911</strain>
    </source>
</reference>
<reference key="5">
    <citation type="journal article" date="1997" name="Electrophoresis">
        <title>Escherichia coli proteome analysis using the gene-protein database.</title>
        <authorList>
            <person name="VanBogelen R.A."/>
            <person name="Abshire K.Z."/>
            <person name="Moldover B."/>
            <person name="Olson E.R."/>
            <person name="Neidhardt F.C."/>
        </authorList>
    </citation>
    <scope>IDENTIFICATION BY 2D-GEL</scope>
</reference>
<reference key="6">
    <citation type="journal article" date="1997" name="Nat. Struct. Biol.">
        <title>Solution structure of the DNA-binding domain and model for the complex of multifunctional hexameric arginine repressor with DNA.</title>
        <authorList>
            <person name="Seelander-Sunnerhagen M."/>
            <person name="Nilges M."/>
            <person name="Otting G."/>
            <person name="Carey J."/>
        </authorList>
    </citation>
    <scope>STRUCTURE BY NMR OF 1-78</scope>
</reference>
<reference key="7">
    <citation type="journal article" date="1996" name="J. Mol. Biol.">
        <title>Structure of the oligomerization and L-arginine binding domain of the arginine repressor of Escherichia coli.</title>
        <authorList>
            <person name="van Duyne G.D."/>
            <person name="Ghosh G."/>
            <person name="Maas W.K."/>
            <person name="Sigler P.B."/>
        </authorList>
    </citation>
    <scope>X-RAY CRYSTALLOGRAPHY (2.2 ANGSTROMS) OF 80-156</scope>
</reference>
<reference key="8">
    <citation type="journal article" date="1995" name="J. Mol. Biol.">
        <title>The DNA-binding domain of the hexameric arginine repressor.</title>
        <authorList>
            <person name="Grandori R."/>
            <person name="Lavoie T.A."/>
            <person name="Pflumm M."/>
            <person name="Tian G."/>
            <person name="Niersbach H."/>
            <person name="Maas W.K."/>
            <person name="Fairman R."/>
            <person name="Carey J."/>
        </authorList>
    </citation>
    <scope>IDENTIFICATION OF DNA-BINDING DOMAIN</scope>
</reference>
<reference key="9">
    <citation type="journal article" date="1994" name="Mol. Microbiol.">
        <title>Mutant Escherichia coli arginine repressor proteins that fail to bind L-arginine, yet retain the ability to bind their normal DNA-binding sites.</title>
        <authorList>
            <person name="Burke M."/>
            <person name="Merican A.F."/>
            <person name="Sherratt D.J."/>
        </authorList>
    </citation>
    <scope>MUTAGENESIS</scope>
</reference>
<reference key="10">
    <citation type="journal article" date="1994" name="Mol. Microbiol.">
        <title>Mutational analysis of the arginine repressor of Escherichia coli.</title>
        <authorList>
            <person name="Tian G."/>
            <person name="Maas W.K."/>
        </authorList>
    </citation>
    <scope>MUTAGENESIS</scope>
</reference>
<sequence>MRSSAKQEELVKAFKALLKEEKFSSQGEIVAALQEQGFDNINQSKVSRMLTKFGAVRTRNAKMEMVYCLPAELGVPTTSSPLKNLVLDIDYNDAVVVIHTSPGAAQLIARLLDSLGKAEGILGTIAGDDTIFTTPANGFTVKDLYEAILELFDQEL</sequence>
<gene>
    <name type="primary">argR</name>
    <name type="synonym">xerA</name>
    <name type="ordered locus">b3237</name>
    <name type="ordered locus">JW3206</name>
</gene>
<organism>
    <name type="scientific">Escherichia coli (strain K12)</name>
    <dbReference type="NCBI Taxonomy" id="83333"/>
    <lineage>
        <taxon>Bacteria</taxon>
        <taxon>Pseudomonadati</taxon>
        <taxon>Pseudomonadota</taxon>
        <taxon>Gammaproteobacteria</taxon>
        <taxon>Enterobacterales</taxon>
        <taxon>Enterobacteriaceae</taxon>
        <taxon>Escherichia</taxon>
    </lineage>
</organism>
<evidence type="ECO:0000305" key="1"/>
<evidence type="ECO:0007829" key="2">
    <source>
        <dbReference type="PDB" id="1AOY"/>
    </source>
</evidence>
<evidence type="ECO:0007829" key="3">
    <source>
        <dbReference type="PDB" id="1XXA"/>
    </source>
</evidence>
<keyword id="KW-0002">3D-structure</keyword>
<keyword id="KW-0028">Amino-acid biosynthesis</keyword>
<keyword id="KW-0055">Arginine biosynthesis</keyword>
<keyword id="KW-0963">Cytoplasm</keyword>
<keyword id="KW-0233">DNA recombination</keyword>
<keyword id="KW-0238">DNA-binding</keyword>
<keyword id="KW-1185">Reference proteome</keyword>
<keyword id="KW-0678">Repressor</keyword>
<keyword id="KW-0804">Transcription</keyword>
<keyword id="KW-0805">Transcription regulation</keyword>
<name>ARGR_ECOLI</name>
<dbReference type="EMBL" id="X13968">
    <property type="protein sequence ID" value="CAA32148.1"/>
    <property type="molecule type" value="Genomic_DNA"/>
</dbReference>
<dbReference type="EMBL" id="M17532">
    <property type="protein sequence ID" value="AAA23486.1"/>
    <property type="molecule type" value="Genomic_DNA"/>
</dbReference>
<dbReference type="EMBL" id="U18997">
    <property type="protein sequence ID" value="AAA58039.1"/>
    <property type="molecule type" value="Genomic_DNA"/>
</dbReference>
<dbReference type="EMBL" id="U00096">
    <property type="protein sequence ID" value="AAC76269.1"/>
    <property type="molecule type" value="Genomic_DNA"/>
</dbReference>
<dbReference type="EMBL" id="AP009048">
    <property type="protein sequence ID" value="BAE77280.1"/>
    <property type="molecule type" value="Genomic_DNA"/>
</dbReference>
<dbReference type="PIR" id="A33888">
    <property type="entry name" value="A33888"/>
</dbReference>
<dbReference type="RefSeq" id="NP_417704.1">
    <property type="nucleotide sequence ID" value="NC_000913.3"/>
</dbReference>
<dbReference type="RefSeq" id="WP_001257846.1">
    <property type="nucleotide sequence ID" value="NZ_STEB01000012.1"/>
</dbReference>
<dbReference type="PDB" id="1AOY">
    <property type="method" value="NMR"/>
    <property type="chains" value="A=1-78"/>
</dbReference>
<dbReference type="PDB" id="1XXA">
    <property type="method" value="X-ray"/>
    <property type="resolution" value="2.20 A"/>
    <property type="chains" value="A/B/C/D/E/F=80-156"/>
</dbReference>
<dbReference type="PDB" id="1XXB">
    <property type="method" value="X-ray"/>
    <property type="resolution" value="2.60 A"/>
    <property type="chains" value="A/B/C/D/E/F=80-156"/>
</dbReference>
<dbReference type="PDB" id="1XXC">
    <property type="method" value="X-ray"/>
    <property type="resolution" value="2.80 A"/>
    <property type="chains" value="A/B/C/D/E/F=80-156"/>
</dbReference>
<dbReference type="PDBsum" id="1AOY"/>
<dbReference type="PDBsum" id="1XXA"/>
<dbReference type="PDBsum" id="1XXB"/>
<dbReference type="PDBsum" id="1XXC"/>
<dbReference type="SMR" id="P0A6D0"/>
<dbReference type="BioGRID" id="4259436">
    <property type="interactions" value="111"/>
</dbReference>
<dbReference type="DIP" id="DIP-47999N"/>
<dbReference type="FunCoup" id="P0A6D0">
    <property type="interactions" value="143"/>
</dbReference>
<dbReference type="IntAct" id="P0A6D0">
    <property type="interactions" value="5"/>
</dbReference>
<dbReference type="STRING" id="511145.b3237"/>
<dbReference type="jPOST" id="P0A6D0"/>
<dbReference type="PaxDb" id="511145-b3237"/>
<dbReference type="EnsemblBacteria" id="AAC76269">
    <property type="protein sequence ID" value="AAC76269"/>
    <property type="gene ID" value="b3237"/>
</dbReference>
<dbReference type="GeneID" id="93778748"/>
<dbReference type="GeneID" id="947861"/>
<dbReference type="KEGG" id="ecj:JW3206"/>
<dbReference type="KEGG" id="eco:b3237"/>
<dbReference type="KEGG" id="ecoc:C3026_17610"/>
<dbReference type="PATRIC" id="fig|1411691.4.peg.3491"/>
<dbReference type="EchoBASE" id="EB0068"/>
<dbReference type="eggNOG" id="COG1438">
    <property type="taxonomic scope" value="Bacteria"/>
</dbReference>
<dbReference type="HOGENOM" id="CLU_097103_2_0_6"/>
<dbReference type="InParanoid" id="P0A6D0"/>
<dbReference type="OMA" id="MHAVKTR"/>
<dbReference type="OrthoDB" id="7060358at2"/>
<dbReference type="PhylomeDB" id="P0A6D0"/>
<dbReference type="BioCyc" id="EcoCyc:PD00194"/>
<dbReference type="UniPathway" id="UPA00068"/>
<dbReference type="EvolutionaryTrace" id="P0A6D0"/>
<dbReference type="PRO" id="PR:P0A6D0"/>
<dbReference type="Proteomes" id="UP000000625">
    <property type="component" value="Chromosome"/>
</dbReference>
<dbReference type="GO" id="GO:0005737">
    <property type="term" value="C:cytoplasm"/>
    <property type="evidence" value="ECO:0007669"/>
    <property type="project" value="UniProtKB-SubCell"/>
</dbReference>
<dbReference type="GO" id="GO:0005667">
    <property type="term" value="C:transcription regulator complex"/>
    <property type="evidence" value="ECO:0000314"/>
    <property type="project" value="EcoCyc"/>
</dbReference>
<dbReference type="GO" id="GO:0034618">
    <property type="term" value="F:arginine binding"/>
    <property type="evidence" value="ECO:0000314"/>
    <property type="project" value="EcoCyc"/>
</dbReference>
<dbReference type="GO" id="GO:0000987">
    <property type="term" value="F:cis-regulatory region sequence-specific DNA binding"/>
    <property type="evidence" value="ECO:0000314"/>
    <property type="project" value="EcoCyc"/>
</dbReference>
<dbReference type="GO" id="GO:0003700">
    <property type="term" value="F:DNA-binding transcription factor activity"/>
    <property type="evidence" value="ECO:0007669"/>
    <property type="project" value="UniProtKB-UniRule"/>
</dbReference>
<dbReference type="GO" id="GO:0042802">
    <property type="term" value="F:identical protein binding"/>
    <property type="evidence" value="ECO:0000314"/>
    <property type="project" value="EcoCyc"/>
</dbReference>
<dbReference type="GO" id="GO:0006526">
    <property type="term" value="P:L-arginine biosynthetic process"/>
    <property type="evidence" value="ECO:0007669"/>
    <property type="project" value="UniProtKB-UniPathway"/>
</dbReference>
<dbReference type="GO" id="GO:2000143">
    <property type="term" value="P:negative regulation of DNA-templated transcription initiation"/>
    <property type="evidence" value="ECO:0000314"/>
    <property type="project" value="EcoCyc"/>
</dbReference>
<dbReference type="GO" id="GO:0042150">
    <property type="term" value="P:plasmid recombination"/>
    <property type="evidence" value="ECO:0000315"/>
    <property type="project" value="EcoliWiki"/>
</dbReference>
<dbReference type="GO" id="GO:2000144">
    <property type="term" value="P:positive regulation of DNA-templated transcription initiation"/>
    <property type="evidence" value="ECO:0000315"/>
    <property type="project" value="EcoCyc"/>
</dbReference>
<dbReference type="GO" id="GO:0051259">
    <property type="term" value="P:protein complex oligomerization"/>
    <property type="evidence" value="ECO:0007669"/>
    <property type="project" value="InterPro"/>
</dbReference>
<dbReference type="GO" id="GO:1900079">
    <property type="term" value="P:regulation of arginine biosynthetic process"/>
    <property type="evidence" value="ECO:0000315"/>
    <property type="project" value="EcoCyc"/>
</dbReference>
<dbReference type="GO" id="GO:1900081">
    <property type="term" value="P:regulation of arginine catabolic process"/>
    <property type="evidence" value="ECO:0000270"/>
    <property type="project" value="EcoCyc"/>
</dbReference>
<dbReference type="GO" id="GO:0000821">
    <property type="term" value="P:regulation of arginine metabolic process"/>
    <property type="evidence" value="ECO:0000318"/>
    <property type="project" value="GO_Central"/>
</dbReference>
<dbReference type="FunFam" id="1.10.10.10:FF:000074">
    <property type="entry name" value="Arginine repressor"/>
    <property type="match status" value="1"/>
</dbReference>
<dbReference type="FunFam" id="3.30.1360.40:FF:000004">
    <property type="entry name" value="Arginine repressor"/>
    <property type="match status" value="1"/>
</dbReference>
<dbReference type="Gene3D" id="3.30.1360.40">
    <property type="match status" value="1"/>
</dbReference>
<dbReference type="Gene3D" id="1.10.10.10">
    <property type="entry name" value="Winged helix-like DNA-binding domain superfamily/Winged helix DNA-binding domain"/>
    <property type="match status" value="1"/>
</dbReference>
<dbReference type="HAMAP" id="MF_00173">
    <property type="entry name" value="Arg_repressor"/>
    <property type="match status" value="1"/>
</dbReference>
<dbReference type="InterPro" id="IPR001669">
    <property type="entry name" value="Arg_repress"/>
</dbReference>
<dbReference type="InterPro" id="IPR020899">
    <property type="entry name" value="Arg_repress_C"/>
</dbReference>
<dbReference type="InterPro" id="IPR036251">
    <property type="entry name" value="Arg_repress_C_sf"/>
</dbReference>
<dbReference type="InterPro" id="IPR020900">
    <property type="entry name" value="Arg_repress_DNA-bd"/>
</dbReference>
<dbReference type="InterPro" id="IPR036388">
    <property type="entry name" value="WH-like_DNA-bd_sf"/>
</dbReference>
<dbReference type="InterPro" id="IPR036390">
    <property type="entry name" value="WH_DNA-bd_sf"/>
</dbReference>
<dbReference type="NCBIfam" id="TIGR01529">
    <property type="entry name" value="argR_whole"/>
    <property type="match status" value="1"/>
</dbReference>
<dbReference type="NCBIfam" id="NF003457">
    <property type="entry name" value="PRK05066.1"/>
    <property type="match status" value="1"/>
</dbReference>
<dbReference type="PANTHER" id="PTHR34471">
    <property type="entry name" value="ARGININE REPRESSOR"/>
    <property type="match status" value="1"/>
</dbReference>
<dbReference type="PANTHER" id="PTHR34471:SF1">
    <property type="entry name" value="ARGININE REPRESSOR"/>
    <property type="match status" value="1"/>
</dbReference>
<dbReference type="Pfam" id="PF01316">
    <property type="entry name" value="Arg_repressor"/>
    <property type="match status" value="1"/>
</dbReference>
<dbReference type="Pfam" id="PF02863">
    <property type="entry name" value="Arg_repressor_C"/>
    <property type="match status" value="1"/>
</dbReference>
<dbReference type="PRINTS" id="PR01467">
    <property type="entry name" value="ARGREPRESSOR"/>
</dbReference>
<dbReference type="SUPFAM" id="SSF55252">
    <property type="entry name" value="C-terminal domain of arginine repressor"/>
    <property type="match status" value="1"/>
</dbReference>
<dbReference type="SUPFAM" id="SSF46785">
    <property type="entry name" value="Winged helix' DNA-binding domain"/>
    <property type="match status" value="1"/>
</dbReference>
<protein>
    <recommendedName>
        <fullName>Arginine repressor</fullName>
    </recommendedName>
</protein>
<accession>P0A6D0</accession>
<accession>P15282</accession>
<accession>Q2M8X6</accession>
<feature type="chain" id="PRO_0000205086" description="Arginine repressor">
    <location>
        <begin position="1"/>
        <end position="156"/>
    </location>
</feature>
<feature type="mutagenesis site" description="Increased affinity for ARG box in the presence of arginine.">
    <original>E</original>
    <variation>K</variation>
    <location>
        <position position="21"/>
    </location>
</feature>
<feature type="mutagenesis site" description="Defective binding to ARG box.">
    <original>S</original>
    <variation>F</variation>
    <location>
        <position position="44"/>
    </location>
</feature>
<feature type="mutagenesis site" description="Defective binding to ARG box.">
    <original>S</original>
    <variation>L</variation>
    <location>
        <position position="47"/>
    </location>
</feature>
<feature type="mutagenesis site" description="Increased affinity for ARG box in the absence of arginine.">
    <original>P</original>
    <variation>L</variation>
    <location>
        <position position="76"/>
    </location>
</feature>
<feature type="mutagenesis site" description="Defective binding to arginine and to ARG box.">
    <original>A</original>
    <variation>V</variation>
    <location>
        <position position="105"/>
    </location>
</feature>
<feature type="mutagenesis site" description="Defective binding to arginine and to ARG box. Forms dimers not hexamers.">
    <original>G</original>
    <variation>D</variation>
    <location>
        <position position="123"/>
    </location>
</feature>
<feature type="helix" evidence="2">
    <location>
        <begin position="10"/>
        <end position="19"/>
    </location>
</feature>
<feature type="helix" evidence="2">
    <location>
        <begin position="26"/>
        <end position="36"/>
    </location>
</feature>
<feature type="helix" evidence="2">
    <location>
        <begin position="43"/>
        <end position="53"/>
    </location>
</feature>
<feature type="strand" evidence="2">
    <location>
        <begin position="56"/>
        <end position="59"/>
    </location>
</feature>
<feature type="strand" evidence="2">
    <location>
        <begin position="65"/>
        <end position="68"/>
    </location>
</feature>
<feature type="strand" evidence="3">
    <location>
        <begin position="85"/>
        <end position="91"/>
    </location>
</feature>
<feature type="strand" evidence="3">
    <location>
        <begin position="96"/>
        <end position="101"/>
    </location>
</feature>
<feature type="turn" evidence="3">
    <location>
        <begin position="102"/>
        <end position="104"/>
    </location>
</feature>
<feature type="helix" evidence="3">
    <location>
        <begin position="105"/>
        <end position="112"/>
    </location>
</feature>
<feature type="turn" evidence="3">
    <location>
        <begin position="113"/>
        <end position="120"/>
    </location>
</feature>
<feature type="strand" evidence="3">
    <location>
        <begin position="121"/>
        <end position="126"/>
    </location>
</feature>
<feature type="strand" evidence="3">
    <location>
        <begin position="128"/>
        <end position="135"/>
    </location>
</feature>
<feature type="helix" evidence="3">
    <location>
        <begin position="141"/>
        <end position="149"/>
    </location>
</feature>